<proteinExistence type="inferred from homology"/>
<name>SC61G_HARAN</name>
<reference key="1">
    <citation type="journal article" date="2003" name="J. Cell Sci.">
        <title>Protein translocation across the endoplasmic reticulum membrane in cold-adapted organisms.</title>
        <authorList>
            <person name="Romisch K."/>
            <person name="Collie N."/>
            <person name="Soto N."/>
            <person name="Logue J."/>
            <person name="Lindsay M."/>
            <person name="Scheper W."/>
            <person name="Cheng C.-H.C."/>
        </authorList>
    </citation>
    <scope>NUCLEOTIDE SEQUENCE [MRNA]</scope>
</reference>
<gene>
    <name type="primary">sec61g</name>
</gene>
<organism>
    <name type="scientific">Harpagifer antarcticus</name>
    <name type="common">Antarctic spiny plunderfish</name>
    <dbReference type="NCBI Taxonomy" id="43256"/>
    <lineage>
        <taxon>Eukaryota</taxon>
        <taxon>Metazoa</taxon>
        <taxon>Chordata</taxon>
        <taxon>Craniata</taxon>
        <taxon>Vertebrata</taxon>
        <taxon>Euteleostomi</taxon>
        <taxon>Actinopterygii</taxon>
        <taxon>Neopterygii</taxon>
        <taxon>Teleostei</taxon>
        <taxon>Neoteleostei</taxon>
        <taxon>Acanthomorphata</taxon>
        <taxon>Eupercaria</taxon>
        <taxon>Perciformes</taxon>
        <taxon>Notothenioidei</taxon>
        <taxon>Harpagiferidae</taxon>
        <taxon>Harpagifer</taxon>
    </lineage>
</organism>
<accession>Q7T207</accession>
<comment type="function">
    <text evidence="1 2">Component of SEC61 channel-forming translocon complex that mediates transport of signal peptide-containing precursor polypeptides across the endoplasmic reticulum (ER). Forms a ribosome receptor and a gated pore in the ER membrane, both functions required for cotranslational translocation of nascent polypeptides (By similarity). The SEC61 channel is also involved in ER membrane insertion of transmembrane proteins: it mediates membrane insertion of the first few transmembrane segments of proteins, while insertion of subsequent transmembrane regions of multi-pass membrane proteins is mediated by the multi-pass translocon (MPT) complex (By similarity).</text>
</comment>
<comment type="subunit">
    <text evidence="1 2">The SEC61 channel-forming translocon complex consists of channel-forming core components SEC61A1, SEC61B and SEC61G and different auxiliary components such as SEC62 and SEC63 (By similarity). The SEC61 channel associates with the multi-pass translocon (MPT) complex (By similarity).</text>
</comment>
<comment type="subcellular location">
    <subcellularLocation>
        <location evidence="1">Endoplasmic reticulum membrane</location>
        <topology evidence="4">Single-pass membrane protein</topology>
    </subcellularLocation>
</comment>
<comment type="similarity">
    <text evidence="4">Belongs to the SecE/SEC61-gamma family.</text>
</comment>
<keyword id="KW-0256">Endoplasmic reticulum</keyword>
<keyword id="KW-0472">Membrane</keyword>
<keyword id="KW-0653">Protein transport</keyword>
<keyword id="KW-0811">Translocation</keyword>
<keyword id="KW-0812">Transmembrane</keyword>
<keyword id="KW-1133">Transmembrane helix</keyword>
<keyword id="KW-0813">Transport</keyword>
<feature type="chain" id="PRO_0000104199" description="Protein transport protein Sec61 subunit gamma">
    <location>
        <begin position="1"/>
        <end position="68"/>
    </location>
</feature>
<feature type="topological domain" description="Cytoplasmic" evidence="3">
    <location>
        <begin position="1"/>
        <end position="32"/>
    </location>
</feature>
<feature type="transmembrane region" description="Helical" evidence="3">
    <location>
        <begin position="33"/>
        <end position="61"/>
    </location>
</feature>
<feature type="topological domain" description="Extracellular" evidence="3">
    <location>
        <begin position="62"/>
        <end position="68"/>
    </location>
</feature>
<dbReference type="EMBL" id="AY258259">
    <property type="protein sequence ID" value="AAP74549.1"/>
    <property type="molecule type" value="mRNA"/>
</dbReference>
<dbReference type="SMR" id="Q7T207"/>
<dbReference type="GO" id="GO:0005789">
    <property type="term" value="C:endoplasmic reticulum membrane"/>
    <property type="evidence" value="ECO:0007669"/>
    <property type="project" value="UniProtKB-SubCell"/>
</dbReference>
<dbReference type="GO" id="GO:0008320">
    <property type="term" value="F:protein transmembrane transporter activity"/>
    <property type="evidence" value="ECO:0000250"/>
    <property type="project" value="UniProtKB"/>
</dbReference>
<dbReference type="GO" id="GO:0043022">
    <property type="term" value="F:ribosome binding"/>
    <property type="evidence" value="ECO:0000250"/>
    <property type="project" value="UniProtKB"/>
</dbReference>
<dbReference type="GO" id="GO:0006886">
    <property type="term" value="P:intracellular protein transport"/>
    <property type="evidence" value="ECO:0007669"/>
    <property type="project" value="InterPro"/>
</dbReference>
<dbReference type="GO" id="GO:0045047">
    <property type="term" value="P:protein targeting to ER"/>
    <property type="evidence" value="ECO:0000250"/>
    <property type="project" value="UniProtKB"/>
</dbReference>
<dbReference type="FunFam" id="1.20.5.820:FF:000001">
    <property type="entry name" value="Transport protein Sec61 subunit gamma"/>
    <property type="match status" value="1"/>
</dbReference>
<dbReference type="Gene3D" id="1.20.5.820">
    <property type="entry name" value="Preprotein translocase SecE subunit"/>
    <property type="match status" value="1"/>
</dbReference>
<dbReference type="HAMAP" id="MF_00422">
    <property type="entry name" value="SecE"/>
    <property type="match status" value="1"/>
</dbReference>
<dbReference type="InterPro" id="IPR023391">
    <property type="entry name" value="Prot_translocase_SecE_dom_sf"/>
</dbReference>
<dbReference type="InterPro" id="IPR008158">
    <property type="entry name" value="Translocase_Sec61-g"/>
</dbReference>
<dbReference type="InterPro" id="IPR001901">
    <property type="entry name" value="Translocase_SecE/Sec61-g"/>
</dbReference>
<dbReference type="NCBIfam" id="TIGR00327">
    <property type="entry name" value="secE_euk_arch"/>
    <property type="match status" value="1"/>
</dbReference>
<dbReference type="PANTHER" id="PTHR12309">
    <property type="entry name" value="SEC61 GAMMA SUBUNIT"/>
    <property type="match status" value="1"/>
</dbReference>
<dbReference type="Pfam" id="PF00584">
    <property type="entry name" value="SecE"/>
    <property type="match status" value="1"/>
</dbReference>
<dbReference type="SUPFAM" id="SSF103456">
    <property type="entry name" value="Preprotein translocase SecE subunit"/>
    <property type="match status" value="1"/>
</dbReference>
<dbReference type="PROSITE" id="PS01067">
    <property type="entry name" value="SECE_SEC61G"/>
    <property type="match status" value="1"/>
</dbReference>
<sequence>MDQVMQFVEPSRQFVKDSIRLVKRCTKPDRKEFQKVAMATAIGFAIMGFIGFFVKLIHIPINNIIVGG</sequence>
<protein>
    <recommendedName>
        <fullName>Protein transport protein Sec61 subunit gamma</fullName>
    </recommendedName>
</protein>
<evidence type="ECO:0000250" key="1">
    <source>
        <dbReference type="UniProtKB" id="P60058"/>
    </source>
</evidence>
<evidence type="ECO:0000250" key="2">
    <source>
        <dbReference type="UniProtKB" id="P60059"/>
    </source>
</evidence>
<evidence type="ECO:0000255" key="3"/>
<evidence type="ECO:0000305" key="4"/>